<organism>
    <name type="scientific">Treponema denticola (strain ATCC 35405 / DSM 14222 / CIP 103919 / JCM 8153 / KCTC 15104)</name>
    <dbReference type="NCBI Taxonomy" id="243275"/>
    <lineage>
        <taxon>Bacteria</taxon>
        <taxon>Pseudomonadati</taxon>
        <taxon>Spirochaetota</taxon>
        <taxon>Spirochaetia</taxon>
        <taxon>Spirochaetales</taxon>
        <taxon>Treponemataceae</taxon>
        <taxon>Treponema</taxon>
    </lineage>
</organism>
<keyword id="KW-0030">Aminoacyl-tRNA synthetase</keyword>
<keyword id="KW-0067">ATP-binding</keyword>
<keyword id="KW-0963">Cytoplasm</keyword>
<keyword id="KW-0436">Ligase</keyword>
<keyword id="KW-0479">Metal-binding</keyword>
<keyword id="KW-0547">Nucleotide-binding</keyword>
<keyword id="KW-0648">Protein biosynthesis</keyword>
<keyword id="KW-1185">Reference proteome</keyword>
<keyword id="KW-0694">RNA-binding</keyword>
<keyword id="KW-0820">tRNA-binding</keyword>
<keyword id="KW-0862">Zinc</keyword>
<accession>Q73NT9</accession>
<evidence type="ECO:0000255" key="1">
    <source>
        <dbReference type="HAMAP-Rule" id="MF_00098"/>
    </source>
</evidence>
<evidence type="ECO:0000256" key="2">
    <source>
        <dbReference type="SAM" id="MobiDB-lite"/>
    </source>
</evidence>
<dbReference type="EC" id="6.1.1.10" evidence="1"/>
<dbReference type="EMBL" id="AE017226">
    <property type="protein sequence ID" value="AAS11552.1"/>
    <property type="molecule type" value="Genomic_DNA"/>
</dbReference>
<dbReference type="RefSeq" id="NP_971671.1">
    <property type="nucleotide sequence ID" value="NC_002967.9"/>
</dbReference>
<dbReference type="RefSeq" id="WP_002682373.1">
    <property type="nucleotide sequence ID" value="NC_002967.9"/>
</dbReference>
<dbReference type="SMR" id="Q73NT9"/>
<dbReference type="STRING" id="243275.TDE_1063"/>
<dbReference type="PaxDb" id="243275-TDE_1063"/>
<dbReference type="GeneID" id="2740824"/>
<dbReference type="KEGG" id="tde:TDE_1063"/>
<dbReference type="PATRIC" id="fig|243275.7.peg.1023"/>
<dbReference type="eggNOG" id="COG0073">
    <property type="taxonomic scope" value="Bacteria"/>
</dbReference>
<dbReference type="eggNOG" id="COG0143">
    <property type="taxonomic scope" value="Bacteria"/>
</dbReference>
<dbReference type="HOGENOM" id="CLU_009710_1_1_12"/>
<dbReference type="OrthoDB" id="9810191at2"/>
<dbReference type="Proteomes" id="UP000008212">
    <property type="component" value="Chromosome"/>
</dbReference>
<dbReference type="GO" id="GO:0017101">
    <property type="term" value="C:aminoacyl-tRNA synthetase multienzyme complex"/>
    <property type="evidence" value="ECO:0007669"/>
    <property type="project" value="TreeGrafter"/>
</dbReference>
<dbReference type="GO" id="GO:0005829">
    <property type="term" value="C:cytosol"/>
    <property type="evidence" value="ECO:0007669"/>
    <property type="project" value="TreeGrafter"/>
</dbReference>
<dbReference type="GO" id="GO:0005524">
    <property type="term" value="F:ATP binding"/>
    <property type="evidence" value="ECO:0007669"/>
    <property type="project" value="UniProtKB-UniRule"/>
</dbReference>
<dbReference type="GO" id="GO:0046872">
    <property type="term" value="F:metal ion binding"/>
    <property type="evidence" value="ECO:0007669"/>
    <property type="project" value="UniProtKB-KW"/>
</dbReference>
<dbReference type="GO" id="GO:0004825">
    <property type="term" value="F:methionine-tRNA ligase activity"/>
    <property type="evidence" value="ECO:0007669"/>
    <property type="project" value="UniProtKB-UniRule"/>
</dbReference>
<dbReference type="GO" id="GO:0000049">
    <property type="term" value="F:tRNA binding"/>
    <property type="evidence" value="ECO:0007669"/>
    <property type="project" value="UniProtKB-KW"/>
</dbReference>
<dbReference type="GO" id="GO:0006431">
    <property type="term" value="P:methionyl-tRNA aminoacylation"/>
    <property type="evidence" value="ECO:0007669"/>
    <property type="project" value="UniProtKB-UniRule"/>
</dbReference>
<dbReference type="CDD" id="cd07957">
    <property type="entry name" value="Anticodon_Ia_Met"/>
    <property type="match status" value="1"/>
</dbReference>
<dbReference type="CDD" id="cd00814">
    <property type="entry name" value="MetRS_core"/>
    <property type="match status" value="1"/>
</dbReference>
<dbReference type="CDD" id="cd02153">
    <property type="entry name" value="tRNA_bindingDomain"/>
    <property type="match status" value="1"/>
</dbReference>
<dbReference type="FunFam" id="2.20.28.20:FF:000001">
    <property type="entry name" value="Methionine--tRNA ligase"/>
    <property type="match status" value="1"/>
</dbReference>
<dbReference type="Gene3D" id="3.40.50.620">
    <property type="entry name" value="HUPs"/>
    <property type="match status" value="1"/>
</dbReference>
<dbReference type="Gene3D" id="1.10.730.10">
    <property type="entry name" value="Isoleucyl-tRNA Synthetase, Domain 1"/>
    <property type="match status" value="1"/>
</dbReference>
<dbReference type="Gene3D" id="2.20.28.20">
    <property type="entry name" value="Methionyl-tRNA synthetase, Zn-domain"/>
    <property type="match status" value="1"/>
</dbReference>
<dbReference type="Gene3D" id="2.40.50.140">
    <property type="entry name" value="Nucleic acid-binding proteins"/>
    <property type="match status" value="1"/>
</dbReference>
<dbReference type="HAMAP" id="MF_00098">
    <property type="entry name" value="Met_tRNA_synth_type1"/>
    <property type="match status" value="1"/>
</dbReference>
<dbReference type="InterPro" id="IPR001412">
    <property type="entry name" value="aa-tRNA-synth_I_CS"/>
</dbReference>
<dbReference type="InterPro" id="IPR041872">
    <property type="entry name" value="Anticodon_Met"/>
</dbReference>
<dbReference type="InterPro" id="IPR023458">
    <property type="entry name" value="Met-tRNA_ligase_1"/>
</dbReference>
<dbReference type="InterPro" id="IPR014758">
    <property type="entry name" value="Met-tRNA_synth"/>
</dbReference>
<dbReference type="InterPro" id="IPR015413">
    <property type="entry name" value="Methionyl/Leucyl_tRNA_Synth"/>
</dbReference>
<dbReference type="InterPro" id="IPR033911">
    <property type="entry name" value="MetRS_core"/>
</dbReference>
<dbReference type="InterPro" id="IPR029038">
    <property type="entry name" value="MetRS_Zn"/>
</dbReference>
<dbReference type="InterPro" id="IPR012340">
    <property type="entry name" value="NA-bd_OB-fold"/>
</dbReference>
<dbReference type="InterPro" id="IPR014729">
    <property type="entry name" value="Rossmann-like_a/b/a_fold"/>
</dbReference>
<dbReference type="InterPro" id="IPR002547">
    <property type="entry name" value="tRNA-bd_dom"/>
</dbReference>
<dbReference type="InterPro" id="IPR009080">
    <property type="entry name" value="tRNAsynth_Ia_anticodon-bd"/>
</dbReference>
<dbReference type="NCBIfam" id="TIGR00398">
    <property type="entry name" value="metG"/>
    <property type="match status" value="1"/>
</dbReference>
<dbReference type="NCBIfam" id="NF001100">
    <property type="entry name" value="PRK00133.1"/>
    <property type="match status" value="1"/>
</dbReference>
<dbReference type="PANTHER" id="PTHR45765">
    <property type="entry name" value="METHIONINE--TRNA LIGASE"/>
    <property type="match status" value="1"/>
</dbReference>
<dbReference type="PANTHER" id="PTHR45765:SF1">
    <property type="entry name" value="METHIONINE--TRNA LIGASE, CYTOPLASMIC"/>
    <property type="match status" value="1"/>
</dbReference>
<dbReference type="Pfam" id="PF09334">
    <property type="entry name" value="tRNA-synt_1g"/>
    <property type="match status" value="1"/>
</dbReference>
<dbReference type="Pfam" id="PF01588">
    <property type="entry name" value="tRNA_bind"/>
    <property type="match status" value="1"/>
</dbReference>
<dbReference type="PRINTS" id="PR01041">
    <property type="entry name" value="TRNASYNTHMET"/>
</dbReference>
<dbReference type="SUPFAM" id="SSF47323">
    <property type="entry name" value="Anticodon-binding domain of a subclass of class I aminoacyl-tRNA synthetases"/>
    <property type="match status" value="1"/>
</dbReference>
<dbReference type="SUPFAM" id="SSF57770">
    <property type="entry name" value="Methionyl-tRNA synthetase (MetRS), Zn-domain"/>
    <property type="match status" value="1"/>
</dbReference>
<dbReference type="SUPFAM" id="SSF50249">
    <property type="entry name" value="Nucleic acid-binding proteins"/>
    <property type="match status" value="1"/>
</dbReference>
<dbReference type="SUPFAM" id="SSF52374">
    <property type="entry name" value="Nucleotidylyl transferase"/>
    <property type="match status" value="1"/>
</dbReference>
<dbReference type="PROSITE" id="PS00178">
    <property type="entry name" value="AA_TRNA_LIGASE_I"/>
    <property type="match status" value="1"/>
</dbReference>
<dbReference type="PROSITE" id="PS50886">
    <property type="entry name" value="TRBD"/>
    <property type="match status" value="1"/>
</dbReference>
<comment type="function">
    <text evidence="1">Is required not only for elongation of protein synthesis but also for the initiation of all mRNA translation through initiator tRNA(fMet) aminoacylation.</text>
</comment>
<comment type="catalytic activity">
    <reaction evidence="1">
        <text>tRNA(Met) + L-methionine + ATP = L-methionyl-tRNA(Met) + AMP + diphosphate</text>
        <dbReference type="Rhea" id="RHEA:13481"/>
        <dbReference type="Rhea" id="RHEA-COMP:9667"/>
        <dbReference type="Rhea" id="RHEA-COMP:9698"/>
        <dbReference type="ChEBI" id="CHEBI:30616"/>
        <dbReference type="ChEBI" id="CHEBI:33019"/>
        <dbReference type="ChEBI" id="CHEBI:57844"/>
        <dbReference type="ChEBI" id="CHEBI:78442"/>
        <dbReference type="ChEBI" id="CHEBI:78530"/>
        <dbReference type="ChEBI" id="CHEBI:456215"/>
        <dbReference type="EC" id="6.1.1.10"/>
    </reaction>
</comment>
<comment type="cofactor">
    <cofactor evidence="1">
        <name>Zn(2+)</name>
        <dbReference type="ChEBI" id="CHEBI:29105"/>
    </cofactor>
    <text evidence="1">Binds 1 zinc ion per subunit.</text>
</comment>
<comment type="subunit">
    <text evidence="1">Homodimer.</text>
</comment>
<comment type="subcellular location">
    <subcellularLocation>
        <location evidence="1">Cytoplasm</location>
    </subcellularLocation>
</comment>
<comment type="similarity">
    <text evidence="1">Belongs to the class-I aminoacyl-tRNA synthetase family. MetG type 1 subfamily.</text>
</comment>
<name>SYM_TREDE</name>
<proteinExistence type="inferred from homology"/>
<reference key="1">
    <citation type="journal article" date="2004" name="Proc. Natl. Acad. Sci. U.S.A.">
        <title>Comparison of the genome of the oral pathogen Treponema denticola with other spirochete genomes.</title>
        <authorList>
            <person name="Seshadri R."/>
            <person name="Myers G.S.A."/>
            <person name="Tettelin H."/>
            <person name="Eisen J.A."/>
            <person name="Heidelberg J.F."/>
            <person name="Dodson R.J."/>
            <person name="Davidsen T.M."/>
            <person name="DeBoy R.T."/>
            <person name="Fouts D.E."/>
            <person name="Haft D.H."/>
            <person name="Selengut J."/>
            <person name="Ren Q."/>
            <person name="Brinkac L.M."/>
            <person name="Madupu R."/>
            <person name="Kolonay J.F."/>
            <person name="Durkin S.A."/>
            <person name="Daugherty S.C."/>
            <person name="Shetty J."/>
            <person name="Shvartsbeyn A."/>
            <person name="Gebregeorgis E."/>
            <person name="Geer K."/>
            <person name="Tsegaye G."/>
            <person name="Malek J.A."/>
            <person name="Ayodeji B."/>
            <person name="Shatsman S."/>
            <person name="McLeod M.P."/>
            <person name="Smajs D."/>
            <person name="Howell J.K."/>
            <person name="Pal S."/>
            <person name="Amin A."/>
            <person name="Vashisth P."/>
            <person name="McNeill T.Z."/>
            <person name="Xiang Q."/>
            <person name="Sodergren E."/>
            <person name="Baca E."/>
            <person name="Weinstock G.M."/>
            <person name="Norris S.J."/>
            <person name="Fraser C.M."/>
            <person name="Paulsen I.T."/>
        </authorList>
    </citation>
    <scope>NUCLEOTIDE SEQUENCE [LARGE SCALE GENOMIC DNA]</scope>
    <source>
        <strain>ATCC 35405 / DSM 14222 / CIP 103919 / JCM 8153 / KCTC 15104</strain>
    </source>
</reference>
<sequence>MKRKLVTSALPYVNNFPHLGNLIQVLSADVFARFCRLKEYETLYICGTDEYGTATETKALEEKKSPEELCSFYHAIHAEIYNWFNIAFDYFGRTSTPQQTEITQGIFNDLDKNGYITEHTIEQLYCPSCKRFLADRYVLGTCPSCSYDGARGDQCEHCGKLLDPTDLKEPRCSSCGAAPEVRSTTHLYINLPKIVPEYEKWMPKTAEEGRWSNNALQMSKSWLRDGLQERAITRDLKWGIPVPKKGFEDKVFYVWFDAPIGYISITKCWADLAGKDWKAWWLDQNDVELFQFIGKDNIPFHTVIFPCSLIGSGKNWTKLFHMSGTEYLNYENGKFSKSKGVGVFGNDAKESGIPADMWRFYIFYNRPEKNDTQFTWKDFQERVNSELIGNLCNLVNRTATFIHRYYDGKIPQVDGAKSGREDIKSMVKSLREAASASFKKITELSDWAELRDSFHEAFALSSVANKAFQDGEPWKRRETDPEYAEALMSELCYLIKDILILIHPYMPQYADQAAGFFGQKIWSGNIFDGKAPQFNKPEGSFLSWKNLGEREGLKTVENPVIIFKTLDNKVIDAYRERYSGSQKDRKKSEKGCSACKDSGSSKSDAAASSAKPEVKLSPAELFSKKIALKTAKIISVERHPDADKLYIEKLDDGSGEERTILSGLVPFLKEDEILGKTVIIADNLKPRKMRGIESKGMLLAASWYDEEEKEHVELLQAPWAAPGTPVILEGDADISDPEAVKAFYAQKPAAIDADTFFAAPILIEDYIPKIEGKKLLVAGKEMKLEKVKTGEAG</sequence>
<protein>
    <recommendedName>
        <fullName evidence="1">Methionine--tRNA ligase</fullName>
        <ecNumber evidence="1">6.1.1.10</ecNumber>
    </recommendedName>
    <alternativeName>
        <fullName evidence="1">Methionyl-tRNA synthetase</fullName>
        <shortName evidence="1">MetRS</shortName>
    </alternativeName>
</protein>
<gene>
    <name evidence="1" type="primary">metG</name>
    <name type="ordered locus">TDE_1063</name>
</gene>
<feature type="chain" id="PRO_0000139167" description="Methionine--tRNA ligase">
    <location>
        <begin position="1"/>
        <end position="793"/>
    </location>
</feature>
<feature type="domain" description="tRNA-binding" evidence="1">
    <location>
        <begin position="622"/>
        <end position="727"/>
    </location>
</feature>
<feature type="region of interest" description="Disordered" evidence="2">
    <location>
        <begin position="581"/>
        <end position="610"/>
    </location>
</feature>
<feature type="short sequence motif" description="'HIGH' region">
    <location>
        <begin position="11"/>
        <end position="21"/>
    </location>
</feature>
<feature type="short sequence motif" description="'KMSKS' region">
    <location>
        <begin position="334"/>
        <end position="338"/>
    </location>
</feature>
<feature type="compositionally biased region" description="Basic and acidic residues" evidence="2">
    <location>
        <begin position="581"/>
        <end position="590"/>
    </location>
</feature>
<feature type="compositionally biased region" description="Low complexity" evidence="2">
    <location>
        <begin position="591"/>
        <end position="610"/>
    </location>
</feature>
<feature type="binding site" evidence="1">
    <location>
        <position position="142"/>
    </location>
    <ligand>
        <name>Zn(2+)</name>
        <dbReference type="ChEBI" id="CHEBI:29105"/>
    </ligand>
</feature>
<feature type="binding site" evidence="1">
    <location>
        <position position="145"/>
    </location>
    <ligand>
        <name>Zn(2+)</name>
        <dbReference type="ChEBI" id="CHEBI:29105"/>
    </ligand>
</feature>
<feature type="binding site" evidence="1">
    <location>
        <position position="155"/>
    </location>
    <ligand>
        <name>Zn(2+)</name>
        <dbReference type="ChEBI" id="CHEBI:29105"/>
    </ligand>
</feature>
<feature type="binding site" evidence="1">
    <location>
        <position position="158"/>
    </location>
    <ligand>
        <name>Zn(2+)</name>
        <dbReference type="ChEBI" id="CHEBI:29105"/>
    </ligand>
</feature>
<feature type="binding site" evidence="1">
    <location>
        <position position="337"/>
    </location>
    <ligand>
        <name>ATP</name>
        <dbReference type="ChEBI" id="CHEBI:30616"/>
    </ligand>
</feature>